<geneLocation type="chloroplast"/>
<keyword id="KW-0150">Chloroplast</keyword>
<keyword id="KW-0249">Electron transport</keyword>
<keyword id="KW-0472">Membrane</keyword>
<keyword id="KW-0602">Photosynthesis</keyword>
<keyword id="KW-0934">Plastid</keyword>
<keyword id="KW-0793">Thylakoid</keyword>
<keyword id="KW-0812">Transmembrane</keyword>
<keyword id="KW-1133">Transmembrane helix</keyword>
<keyword id="KW-0813">Transport</keyword>
<comment type="function">
    <text evidence="1">Component of the cytochrome b6-f complex, which mediates electron transfer between photosystem II (PSII) and photosystem I (PSI), cyclic electron flow around PSI, and state transitions. PetL is important for photoautotrophic growth as well as for electron transfer efficiency and stability of the cytochrome b6-f complex.</text>
</comment>
<comment type="subunit">
    <text evidence="1">The 4 large subunits of the cytochrome b6-f complex are cytochrome b6, subunit IV (17 kDa polypeptide, PetD), cytochrome f and the Rieske protein, while the 4 small subunits are PetG, PetL, PetM and PetN. The complex functions as a dimer.</text>
</comment>
<comment type="subcellular location">
    <subcellularLocation>
        <location evidence="1">Plastid</location>
        <location evidence="1">Chloroplast thylakoid membrane</location>
        <topology evidence="1">Single-pass membrane protein</topology>
    </subcellularLocation>
</comment>
<comment type="similarity">
    <text evidence="1">Belongs to the PetL family.</text>
</comment>
<dbReference type="EMBL" id="EF380353">
    <property type="protein sequence ID" value="ABR01448.1"/>
    <property type="molecule type" value="Genomic_DNA"/>
</dbReference>
<dbReference type="RefSeq" id="YP_001294370.1">
    <property type="nucleotide sequence ID" value="NC_009601.1"/>
</dbReference>
<dbReference type="SMR" id="A6MMM5"/>
<dbReference type="GeneID" id="5236688"/>
<dbReference type="GO" id="GO:0009535">
    <property type="term" value="C:chloroplast thylakoid membrane"/>
    <property type="evidence" value="ECO:0007669"/>
    <property type="project" value="UniProtKB-SubCell"/>
</dbReference>
<dbReference type="GO" id="GO:0009512">
    <property type="term" value="C:cytochrome b6f complex"/>
    <property type="evidence" value="ECO:0007669"/>
    <property type="project" value="InterPro"/>
</dbReference>
<dbReference type="GO" id="GO:0045158">
    <property type="term" value="F:electron transporter, transferring electrons within cytochrome b6/f complex of photosystem II activity"/>
    <property type="evidence" value="ECO:0007669"/>
    <property type="project" value="UniProtKB-UniRule"/>
</dbReference>
<dbReference type="GO" id="GO:0015979">
    <property type="term" value="P:photosynthesis"/>
    <property type="evidence" value="ECO:0007669"/>
    <property type="project" value="UniProtKB-KW"/>
</dbReference>
<dbReference type="HAMAP" id="MF_00433">
    <property type="entry name" value="Cytb6_f_PetL"/>
    <property type="match status" value="1"/>
</dbReference>
<dbReference type="InterPro" id="IPR007802">
    <property type="entry name" value="Cyt_b6/f_cplx_su6"/>
</dbReference>
<dbReference type="PANTHER" id="PTHR37266">
    <property type="entry name" value="CYTOCHROME B6-F COMPLEX SUBUNIT 6"/>
    <property type="match status" value="1"/>
</dbReference>
<dbReference type="PANTHER" id="PTHR37266:SF1">
    <property type="entry name" value="CYTOCHROME B6-F COMPLEX SUBUNIT 6"/>
    <property type="match status" value="1"/>
</dbReference>
<dbReference type="Pfam" id="PF05115">
    <property type="entry name" value="PetL"/>
    <property type="match status" value="1"/>
</dbReference>
<sequence>MLTITSYFGFLLAALTITPALLISLNKIQLI</sequence>
<name>PETL_DIOEL</name>
<proteinExistence type="inferred from homology"/>
<reference key="1">
    <citation type="journal article" date="2007" name="Mol. Phylogenet. Evol.">
        <title>Phylogenetic and evolutionary implications of complete chloroplast genome sequences of four early-diverging angiosperms: Buxus (Buxaceae), Chloranthus (Chloranthaceae), Dioscorea (Dioscoreaceae), and Illicium (Schisandraceae).</title>
        <authorList>
            <person name="Hansen D.R."/>
            <person name="Dastidar S.G."/>
            <person name="Cai Z."/>
            <person name="Penaflor C."/>
            <person name="Kuehl J.V."/>
            <person name="Boore J.L."/>
            <person name="Jansen R.K."/>
        </authorList>
    </citation>
    <scope>NUCLEOTIDE SEQUENCE [LARGE SCALE GENOMIC DNA]</scope>
</reference>
<protein>
    <recommendedName>
        <fullName evidence="1">Cytochrome b6-f complex subunit 6</fullName>
    </recommendedName>
    <alternativeName>
        <fullName evidence="1">Cytochrome b6-f complex subunit PetL</fullName>
    </alternativeName>
    <alternativeName>
        <fullName evidence="1">Cytochrome b6-f complex subunit VI</fullName>
    </alternativeName>
</protein>
<gene>
    <name evidence="1" type="primary">petL</name>
</gene>
<feature type="chain" id="PRO_0000300142" description="Cytochrome b6-f complex subunit 6">
    <location>
        <begin position="1"/>
        <end position="31"/>
    </location>
</feature>
<feature type="transmembrane region" description="Helical" evidence="1">
    <location>
        <begin position="4"/>
        <end position="26"/>
    </location>
</feature>
<organism>
    <name type="scientific">Dioscorea elephantipes</name>
    <name type="common">Elephant's foot yam</name>
    <name type="synonym">Testudinaria elephantipes</name>
    <dbReference type="NCBI Taxonomy" id="145284"/>
    <lineage>
        <taxon>Eukaryota</taxon>
        <taxon>Viridiplantae</taxon>
        <taxon>Streptophyta</taxon>
        <taxon>Embryophyta</taxon>
        <taxon>Tracheophyta</taxon>
        <taxon>Spermatophyta</taxon>
        <taxon>Magnoliopsida</taxon>
        <taxon>Liliopsida</taxon>
        <taxon>Dioscoreales</taxon>
        <taxon>Dioscoreaceae</taxon>
        <taxon>Dioscorea</taxon>
    </lineage>
</organism>
<accession>A6MMM5</accession>
<evidence type="ECO:0000255" key="1">
    <source>
        <dbReference type="HAMAP-Rule" id="MF_00433"/>
    </source>
</evidence>